<reference key="1">
    <citation type="journal article" date="2004" name="Nature">
        <title>Genome sequence of the Brown Norway rat yields insights into mammalian evolution.</title>
        <authorList>
            <person name="Gibbs R.A."/>
            <person name="Weinstock G.M."/>
            <person name="Metzker M.L."/>
            <person name="Muzny D.M."/>
            <person name="Sodergren E.J."/>
            <person name="Scherer S."/>
            <person name="Scott G."/>
            <person name="Steffen D."/>
            <person name="Worley K.C."/>
            <person name="Burch P.E."/>
            <person name="Okwuonu G."/>
            <person name="Hines S."/>
            <person name="Lewis L."/>
            <person name="Deramo C."/>
            <person name="Delgado O."/>
            <person name="Dugan-Rocha S."/>
            <person name="Miner G."/>
            <person name="Morgan M."/>
            <person name="Hawes A."/>
            <person name="Gill R."/>
            <person name="Holt R.A."/>
            <person name="Adams M.D."/>
            <person name="Amanatides P.G."/>
            <person name="Baden-Tillson H."/>
            <person name="Barnstead M."/>
            <person name="Chin S."/>
            <person name="Evans C.A."/>
            <person name="Ferriera S."/>
            <person name="Fosler C."/>
            <person name="Glodek A."/>
            <person name="Gu Z."/>
            <person name="Jennings D."/>
            <person name="Kraft C.L."/>
            <person name="Nguyen T."/>
            <person name="Pfannkoch C.M."/>
            <person name="Sitter C."/>
            <person name="Sutton G.G."/>
            <person name="Venter J.C."/>
            <person name="Woodage T."/>
            <person name="Smith D."/>
            <person name="Lee H.-M."/>
            <person name="Gustafson E."/>
            <person name="Cahill P."/>
            <person name="Kana A."/>
            <person name="Doucette-Stamm L."/>
            <person name="Weinstock K."/>
            <person name="Fechtel K."/>
            <person name="Weiss R.B."/>
            <person name="Dunn D.M."/>
            <person name="Green E.D."/>
            <person name="Blakesley R.W."/>
            <person name="Bouffard G.G."/>
            <person name="De Jong P.J."/>
            <person name="Osoegawa K."/>
            <person name="Zhu B."/>
            <person name="Marra M."/>
            <person name="Schein J."/>
            <person name="Bosdet I."/>
            <person name="Fjell C."/>
            <person name="Jones S."/>
            <person name="Krzywinski M."/>
            <person name="Mathewson C."/>
            <person name="Siddiqui A."/>
            <person name="Wye N."/>
            <person name="McPherson J."/>
            <person name="Zhao S."/>
            <person name="Fraser C.M."/>
            <person name="Shetty J."/>
            <person name="Shatsman S."/>
            <person name="Geer K."/>
            <person name="Chen Y."/>
            <person name="Abramzon S."/>
            <person name="Nierman W.C."/>
            <person name="Havlak P.H."/>
            <person name="Chen R."/>
            <person name="Durbin K.J."/>
            <person name="Egan A."/>
            <person name="Ren Y."/>
            <person name="Song X.-Z."/>
            <person name="Li B."/>
            <person name="Liu Y."/>
            <person name="Qin X."/>
            <person name="Cawley S."/>
            <person name="Cooney A.J."/>
            <person name="D'Souza L.M."/>
            <person name="Martin K."/>
            <person name="Wu J.Q."/>
            <person name="Gonzalez-Garay M.L."/>
            <person name="Jackson A.R."/>
            <person name="Kalafus K.J."/>
            <person name="McLeod M.P."/>
            <person name="Milosavljevic A."/>
            <person name="Virk D."/>
            <person name="Volkov A."/>
            <person name="Wheeler D.A."/>
            <person name="Zhang Z."/>
            <person name="Bailey J.A."/>
            <person name="Eichler E.E."/>
            <person name="Tuzun E."/>
            <person name="Birney E."/>
            <person name="Mongin E."/>
            <person name="Ureta-Vidal A."/>
            <person name="Woodwark C."/>
            <person name="Zdobnov E."/>
            <person name="Bork P."/>
            <person name="Suyama M."/>
            <person name="Torrents D."/>
            <person name="Alexandersson M."/>
            <person name="Trask B.J."/>
            <person name="Young J.M."/>
            <person name="Huang H."/>
            <person name="Wang H."/>
            <person name="Xing H."/>
            <person name="Daniels S."/>
            <person name="Gietzen D."/>
            <person name="Schmidt J."/>
            <person name="Stevens K."/>
            <person name="Vitt U."/>
            <person name="Wingrove J."/>
            <person name="Camara F."/>
            <person name="Mar Alba M."/>
            <person name="Abril J.F."/>
            <person name="Guigo R."/>
            <person name="Smit A."/>
            <person name="Dubchak I."/>
            <person name="Rubin E.M."/>
            <person name="Couronne O."/>
            <person name="Poliakov A."/>
            <person name="Huebner N."/>
            <person name="Ganten D."/>
            <person name="Goesele C."/>
            <person name="Hummel O."/>
            <person name="Kreitler T."/>
            <person name="Lee Y.-A."/>
            <person name="Monti J."/>
            <person name="Schulz H."/>
            <person name="Zimdahl H."/>
            <person name="Himmelbauer H."/>
            <person name="Lehrach H."/>
            <person name="Jacob H.J."/>
            <person name="Bromberg S."/>
            <person name="Gullings-Handley J."/>
            <person name="Jensen-Seaman M.I."/>
            <person name="Kwitek A.E."/>
            <person name="Lazar J."/>
            <person name="Pasko D."/>
            <person name="Tonellato P.J."/>
            <person name="Twigger S."/>
            <person name="Ponting C.P."/>
            <person name="Duarte J.M."/>
            <person name="Rice S."/>
            <person name="Goodstadt L."/>
            <person name="Beatson S.A."/>
            <person name="Emes R.D."/>
            <person name="Winter E.E."/>
            <person name="Webber C."/>
            <person name="Brandt P."/>
            <person name="Nyakatura G."/>
            <person name="Adetobi M."/>
            <person name="Chiaromonte F."/>
            <person name="Elnitski L."/>
            <person name="Eswara P."/>
            <person name="Hardison R.C."/>
            <person name="Hou M."/>
            <person name="Kolbe D."/>
            <person name="Makova K."/>
            <person name="Miller W."/>
            <person name="Nekrutenko A."/>
            <person name="Riemer C."/>
            <person name="Schwartz S."/>
            <person name="Taylor J."/>
            <person name="Yang S."/>
            <person name="Zhang Y."/>
            <person name="Lindpaintner K."/>
            <person name="Andrews T.D."/>
            <person name="Caccamo M."/>
            <person name="Clamp M."/>
            <person name="Clarke L."/>
            <person name="Curwen V."/>
            <person name="Durbin R.M."/>
            <person name="Eyras E."/>
            <person name="Searle S.M."/>
            <person name="Cooper G.M."/>
            <person name="Batzoglou S."/>
            <person name="Brudno M."/>
            <person name="Sidow A."/>
            <person name="Stone E.A."/>
            <person name="Payseur B.A."/>
            <person name="Bourque G."/>
            <person name="Lopez-Otin C."/>
            <person name="Puente X.S."/>
            <person name="Chakrabarti K."/>
            <person name="Chatterji S."/>
            <person name="Dewey C."/>
            <person name="Pachter L."/>
            <person name="Bray N."/>
            <person name="Yap V.B."/>
            <person name="Caspi A."/>
            <person name="Tesler G."/>
            <person name="Pevzner P.A."/>
            <person name="Haussler D."/>
            <person name="Roskin K.M."/>
            <person name="Baertsch R."/>
            <person name="Clawson H."/>
            <person name="Furey T.S."/>
            <person name="Hinrichs A.S."/>
            <person name="Karolchik D."/>
            <person name="Kent W.J."/>
            <person name="Rosenbloom K.R."/>
            <person name="Trumbower H."/>
            <person name="Weirauch M."/>
            <person name="Cooper D.N."/>
            <person name="Stenson P.D."/>
            <person name="Ma B."/>
            <person name="Brent M."/>
            <person name="Arumugam M."/>
            <person name="Shteynberg D."/>
            <person name="Copley R.R."/>
            <person name="Taylor M.S."/>
            <person name="Riethman H."/>
            <person name="Mudunuri U."/>
            <person name="Peterson J."/>
            <person name="Guyer M."/>
            <person name="Felsenfeld A."/>
            <person name="Old S."/>
            <person name="Mockrin S."/>
            <person name="Collins F.S."/>
        </authorList>
    </citation>
    <scope>NUCLEOTIDE SEQUENCE [LARGE SCALE GENOMIC DNA]</scope>
    <source>
        <strain>Brown Norway</strain>
    </source>
</reference>
<reference key="2">
    <citation type="journal article" date="1998" name="Nucleic Acids Res.">
        <title>Interaction of myocyte enhancer factor 2 (MEF2) with a mitogen-activated protein kinase, ERK5/BMK1.</title>
        <authorList>
            <person name="Yang C.-C."/>
            <person name="Ornatsky O.I."/>
            <person name="McDermott J.C."/>
            <person name="Cruz T.F."/>
            <person name="Prody C.A."/>
        </authorList>
    </citation>
    <scope>FUNCTION</scope>
    <scope>INTERACTION WITH MEF2A; MEF2C AND MEF2D</scope>
</reference>
<reference key="3">
    <citation type="journal article" date="2010" name="FASEB J.">
        <title>Novel role of C terminus of Hsc70-interacting protein (CHIP) ubiquitin ligase on inhibiting cardiac apoptosis and dysfunction via regulating ERK5-mediated degradation of inducible cAMP early repressor.</title>
        <authorList>
            <person name="Woo C.H."/>
            <person name="Le N.T."/>
            <person name="Shishido T."/>
            <person name="Chang E."/>
            <person name="Lee H."/>
            <person name="Heo K.S."/>
            <person name="Mickelsen D.M."/>
            <person name="Lu Y."/>
            <person name="McClain C."/>
            <person name="Spangenberg T."/>
            <person name="Yan C."/>
            <person name="Molina C.A."/>
            <person name="Yang J."/>
            <person name="Patterson C."/>
            <person name="Abe J."/>
        </authorList>
    </citation>
    <scope>FUNCTION</scope>
</reference>
<reference key="4">
    <citation type="journal article" date="2013" name="Mol. Cell. Biol.">
        <title>Canonical and kinase activity-independent mechanisms for extracellular signal-regulated kinase 5 (ERK5) nuclear translocation require dissociation of Hsp90 from the ERK5-Cdc37 complex.</title>
        <authorList>
            <person name="Erazo T."/>
            <person name="Moreno A."/>
            <person name="Ruiz-Babot G."/>
            <person name="Rodriguez-Asiain A."/>
            <person name="Morrice N.A."/>
            <person name="Espadamala J."/>
            <person name="Bayascas J.R."/>
            <person name="Gomez N."/>
            <person name="Lizcano J.M."/>
        </authorList>
    </citation>
    <scope>INTERACTION WITH HSP90AB1</scope>
</reference>
<protein>
    <recommendedName>
        <fullName>Mitogen-activated protein kinase 7</fullName>
        <shortName>MAP kinase 7</shortName>
        <shortName>MAPK 7</shortName>
        <ecNumber>2.7.11.24</ecNumber>
    </recommendedName>
    <alternativeName>
        <fullName>Big MAP kinase 1</fullName>
        <shortName>BMK-1</shortName>
    </alternativeName>
    <alternativeName>
        <fullName>Extracellular signal-regulated kinase 5</fullName>
        <shortName>ERK-5</shortName>
    </alternativeName>
</protein>
<dbReference type="EC" id="2.7.11.24"/>
<dbReference type="EMBL" id="AABR03073216">
    <property type="status" value="NOT_ANNOTATED_CDS"/>
    <property type="molecule type" value="Genomic_DNA"/>
</dbReference>
<dbReference type="SMR" id="P0C865"/>
<dbReference type="FunCoup" id="P0C865">
    <property type="interactions" value="1819"/>
</dbReference>
<dbReference type="STRING" id="10116.ENSRNOP00000054673"/>
<dbReference type="GlyGen" id="P0C865">
    <property type="glycosylation" value="1 site"/>
</dbReference>
<dbReference type="iPTMnet" id="P0C865"/>
<dbReference type="PhosphoSitePlus" id="P0C865"/>
<dbReference type="jPOST" id="P0C865"/>
<dbReference type="PaxDb" id="10116-ENSRNOP00000054673"/>
<dbReference type="UCSC" id="RGD:621505">
    <property type="organism name" value="rat"/>
</dbReference>
<dbReference type="AGR" id="RGD:621505"/>
<dbReference type="RGD" id="621505">
    <property type="gene designation" value="Mapk7"/>
</dbReference>
<dbReference type="eggNOG" id="KOG0660">
    <property type="taxonomic scope" value="Eukaryota"/>
</dbReference>
<dbReference type="InParanoid" id="P0C865"/>
<dbReference type="PhylomeDB" id="P0C865"/>
<dbReference type="Reactome" id="R-RNO-198753">
    <property type="pathway name" value="ERK/MAPK targets"/>
</dbReference>
<dbReference type="Reactome" id="R-RNO-198765">
    <property type="pathway name" value="Signalling to ERK5"/>
</dbReference>
<dbReference type="Reactome" id="R-RNO-202670">
    <property type="pathway name" value="ERKs are inactivated"/>
</dbReference>
<dbReference type="Reactome" id="R-RNO-2559582">
    <property type="pathway name" value="Senescence-Associated Secretory Phenotype (SASP)"/>
</dbReference>
<dbReference type="Reactome" id="R-RNO-881907">
    <property type="pathway name" value="Gastrin-CREB signalling pathway via PKC and MAPK"/>
</dbReference>
<dbReference type="Reactome" id="R-RNO-8853659">
    <property type="pathway name" value="RET signaling"/>
</dbReference>
<dbReference type="PRO" id="PR:P0C865"/>
<dbReference type="Proteomes" id="UP000002494">
    <property type="component" value="Unplaced"/>
</dbReference>
<dbReference type="GO" id="GO:0005737">
    <property type="term" value="C:cytoplasm"/>
    <property type="evidence" value="ECO:0000250"/>
    <property type="project" value="UniProtKB"/>
</dbReference>
<dbReference type="GO" id="GO:0005829">
    <property type="term" value="C:cytosol"/>
    <property type="evidence" value="ECO:0000266"/>
    <property type="project" value="RGD"/>
</dbReference>
<dbReference type="GO" id="GO:0005634">
    <property type="term" value="C:nucleus"/>
    <property type="evidence" value="ECO:0000266"/>
    <property type="project" value="RGD"/>
</dbReference>
<dbReference type="GO" id="GO:0016605">
    <property type="term" value="C:PML body"/>
    <property type="evidence" value="ECO:0000250"/>
    <property type="project" value="UniProtKB"/>
</dbReference>
<dbReference type="GO" id="GO:0005524">
    <property type="term" value="F:ATP binding"/>
    <property type="evidence" value="ECO:0000314"/>
    <property type="project" value="RGD"/>
</dbReference>
<dbReference type="GO" id="GO:0004707">
    <property type="term" value="F:MAP kinase activity"/>
    <property type="evidence" value="ECO:0000314"/>
    <property type="project" value="RGD"/>
</dbReference>
<dbReference type="GO" id="GO:0051019">
    <property type="term" value="F:mitogen-activated protein kinase binding"/>
    <property type="evidence" value="ECO:0000266"/>
    <property type="project" value="RGD"/>
</dbReference>
<dbReference type="GO" id="GO:0004672">
    <property type="term" value="F:protein kinase activity"/>
    <property type="evidence" value="ECO:0000266"/>
    <property type="project" value="RGD"/>
</dbReference>
<dbReference type="GO" id="GO:0106310">
    <property type="term" value="F:protein serine kinase activity"/>
    <property type="evidence" value="ECO:0007669"/>
    <property type="project" value="RHEA"/>
</dbReference>
<dbReference type="GO" id="GO:0004674">
    <property type="term" value="F:protein serine/threonine kinase activity"/>
    <property type="evidence" value="ECO:0000266"/>
    <property type="project" value="RGD"/>
</dbReference>
<dbReference type="GO" id="GO:0033173">
    <property type="term" value="P:calcineurin-NFAT signaling cascade"/>
    <property type="evidence" value="ECO:0000266"/>
    <property type="project" value="RGD"/>
</dbReference>
<dbReference type="GO" id="GO:0030154">
    <property type="term" value="P:cell differentiation"/>
    <property type="evidence" value="ECO:0007669"/>
    <property type="project" value="UniProtKB-KW"/>
</dbReference>
<dbReference type="GO" id="GO:0071363">
    <property type="term" value="P:cellular response to growth factor stimulus"/>
    <property type="evidence" value="ECO:0000266"/>
    <property type="project" value="RGD"/>
</dbReference>
<dbReference type="GO" id="GO:0070301">
    <property type="term" value="P:cellular response to hydrogen peroxide"/>
    <property type="evidence" value="ECO:0000266"/>
    <property type="project" value="RGD"/>
</dbReference>
<dbReference type="GO" id="GO:0071499">
    <property type="term" value="P:cellular response to laminar fluid shear stress"/>
    <property type="evidence" value="ECO:0000266"/>
    <property type="project" value="RGD"/>
</dbReference>
<dbReference type="GO" id="GO:0071560">
    <property type="term" value="P:cellular response to transforming growth factor beta stimulus"/>
    <property type="evidence" value="ECO:0000266"/>
    <property type="project" value="RGD"/>
</dbReference>
<dbReference type="GO" id="GO:0070375">
    <property type="term" value="P:ERK5 cascade"/>
    <property type="evidence" value="ECO:0000315"/>
    <property type="project" value="RGD"/>
</dbReference>
<dbReference type="GO" id="GO:0035556">
    <property type="term" value="P:intracellular signal transduction"/>
    <property type="evidence" value="ECO:0000318"/>
    <property type="project" value="GO_Central"/>
</dbReference>
<dbReference type="GO" id="GO:0000165">
    <property type="term" value="P:MAPK cascade"/>
    <property type="evidence" value="ECO:0000315"/>
    <property type="project" value="UniProtKB"/>
</dbReference>
<dbReference type="GO" id="GO:0043066">
    <property type="term" value="P:negative regulation of apoptotic process"/>
    <property type="evidence" value="ECO:0000266"/>
    <property type="project" value="RGD"/>
</dbReference>
<dbReference type="GO" id="GO:0070885">
    <property type="term" value="P:negative regulation of calcineurin-NFAT signaling cascade"/>
    <property type="evidence" value="ECO:0000266"/>
    <property type="project" value="RGD"/>
</dbReference>
<dbReference type="GO" id="GO:2000352">
    <property type="term" value="P:negative regulation of endothelial cell apoptotic process"/>
    <property type="evidence" value="ECO:0000266"/>
    <property type="project" value="RGD"/>
</dbReference>
<dbReference type="GO" id="GO:2001240">
    <property type="term" value="P:negative regulation of extrinsic apoptotic signaling pathway in absence of ligand"/>
    <property type="evidence" value="ECO:0000266"/>
    <property type="project" value="RGD"/>
</dbReference>
<dbReference type="GO" id="GO:0034115">
    <property type="term" value="P:negative regulation of heterotypic cell-cell adhesion"/>
    <property type="evidence" value="ECO:0000266"/>
    <property type="project" value="RGD"/>
</dbReference>
<dbReference type="GO" id="GO:1902176">
    <property type="term" value="P:negative regulation of oxidative stress-induced intrinsic apoptotic signaling pathway"/>
    <property type="evidence" value="ECO:0000266"/>
    <property type="project" value="RGD"/>
</dbReference>
<dbReference type="GO" id="GO:0060761">
    <property type="term" value="P:negative regulation of response to cytokine stimulus"/>
    <property type="evidence" value="ECO:0000266"/>
    <property type="project" value="RGD"/>
</dbReference>
<dbReference type="GO" id="GO:0034392">
    <property type="term" value="P:negative regulation of smooth muscle cell apoptotic process"/>
    <property type="evidence" value="ECO:0000315"/>
    <property type="project" value="UniProtKB"/>
</dbReference>
<dbReference type="GO" id="GO:0051247">
    <property type="term" value="P:positive regulation of protein metabolic process"/>
    <property type="evidence" value="ECO:0000266"/>
    <property type="project" value="RGD"/>
</dbReference>
<dbReference type="GO" id="GO:0045944">
    <property type="term" value="P:positive regulation of transcription by RNA polymerase II"/>
    <property type="evidence" value="ECO:0000266"/>
    <property type="project" value="RGD"/>
</dbReference>
<dbReference type="GO" id="GO:0045765">
    <property type="term" value="P:regulation of angiogenesis"/>
    <property type="evidence" value="ECO:0000266"/>
    <property type="project" value="RGD"/>
</dbReference>
<dbReference type="CDD" id="cd07855">
    <property type="entry name" value="STKc_ERK5"/>
    <property type="match status" value="1"/>
</dbReference>
<dbReference type="FunFam" id="1.10.510.10:FF:000013">
    <property type="entry name" value="Mitogen-activated protein kinase"/>
    <property type="match status" value="1"/>
</dbReference>
<dbReference type="FunFam" id="3.30.200.20:FF:000242">
    <property type="entry name" value="Mitogen-activated protein kinase"/>
    <property type="match status" value="1"/>
</dbReference>
<dbReference type="Gene3D" id="3.30.200.20">
    <property type="entry name" value="Phosphorylase Kinase, domain 1"/>
    <property type="match status" value="1"/>
</dbReference>
<dbReference type="Gene3D" id="1.10.510.10">
    <property type="entry name" value="Transferase(Phosphotransferase) domain 1"/>
    <property type="match status" value="1"/>
</dbReference>
<dbReference type="InterPro" id="IPR011009">
    <property type="entry name" value="Kinase-like_dom_sf"/>
</dbReference>
<dbReference type="InterPro" id="IPR050117">
    <property type="entry name" value="MAP_kinase"/>
</dbReference>
<dbReference type="InterPro" id="IPR003527">
    <property type="entry name" value="MAP_kinase_CS"/>
</dbReference>
<dbReference type="InterPro" id="IPR000719">
    <property type="entry name" value="Prot_kinase_dom"/>
</dbReference>
<dbReference type="InterPro" id="IPR017441">
    <property type="entry name" value="Protein_kinase_ATP_BS"/>
</dbReference>
<dbReference type="InterPro" id="IPR008271">
    <property type="entry name" value="Ser/Thr_kinase_AS"/>
</dbReference>
<dbReference type="PANTHER" id="PTHR24055">
    <property type="entry name" value="MITOGEN-ACTIVATED PROTEIN KINASE"/>
    <property type="match status" value="1"/>
</dbReference>
<dbReference type="Pfam" id="PF00069">
    <property type="entry name" value="Pkinase"/>
    <property type="match status" value="1"/>
</dbReference>
<dbReference type="SMART" id="SM00220">
    <property type="entry name" value="S_TKc"/>
    <property type="match status" value="1"/>
</dbReference>
<dbReference type="SUPFAM" id="SSF56112">
    <property type="entry name" value="Protein kinase-like (PK-like)"/>
    <property type="match status" value="1"/>
</dbReference>
<dbReference type="PROSITE" id="PS01351">
    <property type="entry name" value="MAPK"/>
    <property type="match status" value="1"/>
</dbReference>
<dbReference type="PROSITE" id="PS00107">
    <property type="entry name" value="PROTEIN_KINASE_ATP"/>
    <property type="match status" value="1"/>
</dbReference>
<dbReference type="PROSITE" id="PS50011">
    <property type="entry name" value="PROTEIN_KINASE_DOM"/>
    <property type="match status" value="1"/>
</dbReference>
<dbReference type="PROSITE" id="PS00108">
    <property type="entry name" value="PROTEIN_KINASE_ST"/>
    <property type="match status" value="1"/>
</dbReference>
<comment type="function">
    <text evidence="1 6 8">Plays a role in various cellular processes such as proliferation, differentiation and cell survival. The upstream activator of MAPK7 is the MAPK kinase MAP2K5. Upon activation, it translocates to the nucleus and phosphorylates various downstream targets including MEF2C. EGF activates MAPK7 through a Ras-independent and MAP2K5-dependent pathway. As part of the MAPK/ERK signaling pathway, acts as a negative regulator of apoptosis in cardiomyocytes via interaction with STUB1/CHIP and promotion of STUB1-mediated ubiquitination and degradation of ICER-type isoforms of CREM (PubMed:20724525). May have a role in muscle cell differentiation. May be important for endothelial function and maintenance of blood vessel integrity. MAP2K5 and MAPK7 interact specifically with one another and not with MEK1/ERK1 or MEK2/ERK2 pathways. Phosphorylates SGK1 at Ser-78 and this is required for growth factor-induced cell cycle progression (By similarity). Involved in the regulation of p53/TP53 by disrupting the PML-MDM2 interaction (By similarity).</text>
</comment>
<comment type="catalytic activity">
    <reaction>
        <text>L-seryl-[protein] + ATP = O-phospho-L-seryl-[protein] + ADP + H(+)</text>
        <dbReference type="Rhea" id="RHEA:17989"/>
        <dbReference type="Rhea" id="RHEA-COMP:9863"/>
        <dbReference type="Rhea" id="RHEA-COMP:11604"/>
        <dbReference type="ChEBI" id="CHEBI:15378"/>
        <dbReference type="ChEBI" id="CHEBI:29999"/>
        <dbReference type="ChEBI" id="CHEBI:30616"/>
        <dbReference type="ChEBI" id="CHEBI:83421"/>
        <dbReference type="ChEBI" id="CHEBI:456216"/>
        <dbReference type="EC" id="2.7.11.24"/>
    </reaction>
</comment>
<comment type="catalytic activity">
    <reaction>
        <text>L-threonyl-[protein] + ATP = O-phospho-L-threonyl-[protein] + ADP + H(+)</text>
        <dbReference type="Rhea" id="RHEA:46608"/>
        <dbReference type="Rhea" id="RHEA-COMP:11060"/>
        <dbReference type="Rhea" id="RHEA-COMP:11605"/>
        <dbReference type="ChEBI" id="CHEBI:15378"/>
        <dbReference type="ChEBI" id="CHEBI:30013"/>
        <dbReference type="ChEBI" id="CHEBI:30616"/>
        <dbReference type="ChEBI" id="CHEBI:61977"/>
        <dbReference type="ChEBI" id="CHEBI:456216"/>
        <dbReference type="EC" id="2.7.11.24"/>
    </reaction>
</comment>
<comment type="cofactor">
    <cofactor evidence="1">
        <name>Mg(2+)</name>
        <dbReference type="ChEBI" id="CHEBI:18420"/>
    </cofactor>
</comment>
<comment type="activity regulation">
    <text evidence="1">Activated by tyrosine and threonine phosphorylation. Activated in response to hyperosmolarity, hydrogen peroxide, and epidermal growth factor (EGF) (By similarity).</text>
</comment>
<comment type="subunit">
    <text evidence="1 2 7">Interacts with MAP2K5. Forms oligomers (By similarity). Interacts with MEF2A, MEF2C and MEF2D; the interaction phosphorylates the MEF2s and enhances transcriptional activity of MEF2A, MEF2C but not MEF2D. Interacts with SGK1 (By similarity). Interacts with PML (By similarity). Interacts (via N-terminal half) with HSP90AB1-CDC37 chaperone complex in resting cells; the interaction is MAP2K5-independent and prevents MAPK7 from ubiquitination and proteasomal degradation (PubMed:23428871). Interacts with STUB1/CHIP; the interaction is enhanced in the presence of IGF1 or MAP2K5 and promotes STUB1/CHIP E3 ligase activity (By similarity).</text>
</comment>
<comment type="subcellular location">
    <subcellularLocation>
        <location>Cytoplasm</location>
    </subcellularLocation>
    <subcellularLocation>
        <location>Nucleus</location>
    </subcellularLocation>
    <subcellularLocation>
        <location evidence="1">Nucleus</location>
        <location evidence="1">PML body</location>
    </subcellularLocation>
    <text evidence="1">Translocates to the nucleus upon activation.</text>
</comment>
<comment type="domain">
    <text>The second proline-rich region may interact with actin targeting the kinase to a specific location in the cell.</text>
</comment>
<comment type="domain">
    <text>The TXY motif contains the threonine and tyrosine residues whose phosphorylation activates the MAP kinases.</text>
</comment>
<comment type="PTM">
    <text evidence="1">Dually phosphorylated on Thr-219 and Tyr-221, which activates the enzyme.</text>
</comment>
<comment type="similarity">
    <text evidence="9">Belongs to the protein kinase superfamily. CMGC Ser/Thr protein kinase family. MAP kinase subfamily.</text>
</comment>
<accession>P0C865</accession>
<organism>
    <name type="scientific">Rattus norvegicus</name>
    <name type="common">Rat</name>
    <dbReference type="NCBI Taxonomy" id="10116"/>
    <lineage>
        <taxon>Eukaryota</taxon>
        <taxon>Metazoa</taxon>
        <taxon>Chordata</taxon>
        <taxon>Craniata</taxon>
        <taxon>Vertebrata</taxon>
        <taxon>Euteleostomi</taxon>
        <taxon>Mammalia</taxon>
        <taxon>Eutheria</taxon>
        <taxon>Euarchontoglires</taxon>
        <taxon>Glires</taxon>
        <taxon>Rodentia</taxon>
        <taxon>Myomorpha</taxon>
        <taxon>Muroidea</taxon>
        <taxon>Muridae</taxon>
        <taxon>Murinae</taxon>
        <taxon>Rattus</taxon>
    </lineage>
</organism>
<keyword id="KW-0007">Acetylation</keyword>
<keyword id="KW-0067">ATP-binding</keyword>
<keyword id="KW-0131">Cell cycle</keyword>
<keyword id="KW-0963">Cytoplasm</keyword>
<keyword id="KW-0221">Differentiation</keyword>
<keyword id="KW-0418">Kinase</keyword>
<keyword id="KW-0547">Nucleotide-binding</keyword>
<keyword id="KW-0539">Nucleus</keyword>
<keyword id="KW-0597">Phosphoprotein</keyword>
<keyword id="KW-1185">Reference proteome</keyword>
<keyword id="KW-0723">Serine/threonine-protein kinase</keyword>
<keyword id="KW-0808">Transferase</keyword>
<proteinExistence type="evidence at protein level"/>
<sequence length="806" mass="87827">MAEPLKEEDGEDGSGEPPGRVKAEPVHTAASVVAKNLALLKARSFDVTFDVGDEYEIIETIGNGAYGVVSSARRRLTGQQVAIKKIPNAFDVVTNAKRTLRELKILKHFKHDNIIAIKDILRPTVPYGEFRSVYVVLDLMESDLHQIIHSSQPLTLEHVRYFLYQLLRGLKYMHSAQVIHRDLKPSNLLVNENCELKIGDFGMARGLCTSPAEHQYFMTEYVATRWYRAPELMLSLHEYTQAIDLWSVGCIFGEMLARRQLFPGKNYVHQLQLIMMVLGTPSPAVIQAVGAERVRAYIQSLPPRQPVPWETVYPGADRQALSLLGRMLRFEPSARISAAAALRHPFLAKYHDPDDEPDCAPPFDFAFDREALTRERIKEAIVAEIEDFHARREGIRQQIRFQPSLQPVASEPVCPDVEMPSPWAPSGDCAMESPPPALPPCSGPAPDTVDLTLQPAPPASELAPPKREGAISDNTKAALKAALLKSLRSRLRDGPSAPLEAPEPRKPVTAQERQREREEKRRRRQERAKEREKRRQERERKERGAGTLGGPSTDPLAGLVLSDNDRSLLERWTRMARPPVPAPAPAPAPTPKPSSAQPTSPPNGPVSQSTAPLQPAGSIPGPASQPVCPPPGPVPQPAGPVPAPLQTAPSTSLLASQSLVPPSGLPGSGAPEVLPYFPSGPPPPDPGLTPQPSTSESPDVNLVTQQLSKSQVEDPLPPVFSGTPKGSGAGYGVGFDLEEFLNQSFDMGVADGPQDGQADSASLSASLLADWLEGHGMNPADIESLQREIQMDSPMLLSDLPDLQEP</sequence>
<gene>
    <name type="primary">Mapk7</name>
    <name type="synonym">Bmk1</name>
    <name type="synonym">Erk5</name>
</gene>
<evidence type="ECO:0000250" key="1"/>
<evidence type="ECO:0000250" key="2">
    <source>
        <dbReference type="UniProtKB" id="Q13164"/>
    </source>
</evidence>
<evidence type="ECO:0000255" key="3">
    <source>
        <dbReference type="PROSITE-ProRule" id="PRU00159"/>
    </source>
</evidence>
<evidence type="ECO:0000255" key="4">
    <source>
        <dbReference type="PROSITE-ProRule" id="PRU10027"/>
    </source>
</evidence>
<evidence type="ECO:0000256" key="5">
    <source>
        <dbReference type="SAM" id="MobiDB-lite"/>
    </source>
</evidence>
<evidence type="ECO:0000269" key="6">
    <source>
    </source>
</evidence>
<evidence type="ECO:0000269" key="7">
    <source>
    </source>
</evidence>
<evidence type="ECO:0000269" key="8">
    <source>
    </source>
</evidence>
<evidence type="ECO:0000305" key="9"/>
<feature type="initiator methionine" description="Removed" evidence="2">
    <location>
        <position position="1"/>
    </location>
</feature>
<feature type="chain" id="PRO_0000349105" description="Mitogen-activated protein kinase 7">
    <location>
        <begin position="2"/>
        <end position="806"/>
    </location>
</feature>
<feature type="domain" description="Protein kinase" evidence="3">
    <location>
        <begin position="55"/>
        <end position="347"/>
    </location>
</feature>
<feature type="region of interest" description="Disordered" evidence="5">
    <location>
        <begin position="1"/>
        <end position="23"/>
    </location>
</feature>
<feature type="region of interest" description="Required for cytoplasmic targeting" evidence="1">
    <location>
        <begin position="2"/>
        <end position="77"/>
    </location>
</feature>
<feature type="region of interest" description="Required for binding to MAP2K5" evidence="1">
    <location>
        <begin position="78"/>
        <end position="139"/>
    </location>
</feature>
<feature type="region of interest" description="Necessary for oligomerization" evidence="1">
    <location>
        <begin position="140"/>
        <end position="406"/>
    </location>
</feature>
<feature type="region of interest" description="May not be required for kinase activity; required to stimulate MEF2C activity" evidence="1">
    <location>
        <begin position="407"/>
        <end position="806"/>
    </location>
</feature>
<feature type="region of interest" description="Disordered" evidence="5">
    <location>
        <begin position="424"/>
        <end position="475"/>
    </location>
</feature>
<feature type="region of interest" description="Disordered" evidence="5">
    <location>
        <begin position="488"/>
        <end position="727"/>
    </location>
</feature>
<feature type="short sequence motif" description="TXY" evidence="1">
    <location>
        <begin position="219"/>
        <end position="221"/>
    </location>
</feature>
<feature type="short sequence motif" description="Nuclear localization signal" evidence="1">
    <location>
        <begin position="505"/>
        <end position="539"/>
    </location>
</feature>
<feature type="compositionally biased region" description="Pro residues" evidence="5">
    <location>
        <begin position="433"/>
        <end position="443"/>
    </location>
</feature>
<feature type="compositionally biased region" description="Basic and acidic residues" evidence="5">
    <location>
        <begin position="502"/>
        <end position="519"/>
    </location>
</feature>
<feature type="compositionally biased region" description="Basic and acidic residues" evidence="5">
    <location>
        <begin position="527"/>
        <end position="544"/>
    </location>
</feature>
<feature type="compositionally biased region" description="Basic and acidic residues" evidence="5">
    <location>
        <begin position="563"/>
        <end position="573"/>
    </location>
</feature>
<feature type="compositionally biased region" description="Pro residues" evidence="5">
    <location>
        <begin position="578"/>
        <end position="592"/>
    </location>
</feature>
<feature type="compositionally biased region" description="Pro residues" evidence="5">
    <location>
        <begin position="627"/>
        <end position="643"/>
    </location>
</feature>
<feature type="compositionally biased region" description="Polar residues" evidence="5">
    <location>
        <begin position="647"/>
        <end position="660"/>
    </location>
</feature>
<feature type="compositionally biased region" description="Pro residues" evidence="5">
    <location>
        <begin position="678"/>
        <end position="689"/>
    </location>
</feature>
<feature type="compositionally biased region" description="Polar residues" evidence="5">
    <location>
        <begin position="693"/>
        <end position="710"/>
    </location>
</feature>
<feature type="active site" description="Proton acceptor" evidence="3 4">
    <location>
        <position position="182"/>
    </location>
</feature>
<feature type="binding site" evidence="3">
    <location>
        <begin position="61"/>
        <end position="69"/>
    </location>
    <ligand>
        <name>ATP</name>
        <dbReference type="ChEBI" id="CHEBI:30616"/>
    </ligand>
</feature>
<feature type="binding site" evidence="3">
    <location>
        <position position="84"/>
    </location>
    <ligand>
        <name>ATP</name>
        <dbReference type="ChEBI" id="CHEBI:30616"/>
    </ligand>
</feature>
<feature type="modified residue" description="N-acetylalanine" evidence="2">
    <location>
        <position position="2"/>
    </location>
</feature>
<feature type="modified residue" description="Phosphoserine" evidence="2">
    <location>
        <position position="710"/>
    </location>
</feature>
<feature type="modified residue" description="Phosphothreonine" evidence="2">
    <location>
        <position position="723"/>
    </location>
</feature>
<name>MK07_RAT</name>